<keyword id="KW-0963">Cytoplasm</keyword>
<keyword id="KW-0255">Endonuclease</keyword>
<keyword id="KW-0378">Hydrolase</keyword>
<keyword id="KW-0460">Magnesium</keyword>
<keyword id="KW-0479">Metal-binding</keyword>
<keyword id="KW-0540">Nuclease</keyword>
<keyword id="KW-1185">Reference proteome</keyword>
<comment type="function">
    <text evidence="1">Endonuclease that specifically degrades the RNA of RNA-DNA hybrids.</text>
</comment>
<comment type="catalytic activity">
    <reaction evidence="1">
        <text>Endonucleolytic cleavage to 5'-phosphomonoester.</text>
        <dbReference type="EC" id="3.1.26.4"/>
    </reaction>
</comment>
<comment type="cofactor">
    <cofactor evidence="1">
        <name>Mg(2+)</name>
        <dbReference type="ChEBI" id="CHEBI:18420"/>
    </cofactor>
    <text evidence="1">Binds 1 Mg(2+) ion per subunit. May bind a second metal ion at a regulatory site, or after substrate binding.</text>
</comment>
<comment type="subunit">
    <text evidence="1">Monomer.</text>
</comment>
<comment type="subcellular location">
    <subcellularLocation>
        <location evidence="1">Cytoplasm</location>
    </subcellularLocation>
</comment>
<comment type="similarity">
    <text evidence="1">Belongs to the RNase H family.</text>
</comment>
<feature type="chain" id="PRO_1000116575" description="Ribonuclease H">
    <location>
        <begin position="1"/>
        <end position="163"/>
    </location>
</feature>
<feature type="domain" description="RNase H type-1" evidence="2">
    <location>
        <begin position="4"/>
        <end position="146"/>
    </location>
</feature>
<feature type="binding site" evidence="1">
    <location>
        <position position="13"/>
    </location>
    <ligand>
        <name>Mg(2+)</name>
        <dbReference type="ChEBI" id="CHEBI:18420"/>
        <label>1</label>
    </ligand>
</feature>
<feature type="binding site" evidence="1">
    <location>
        <position position="13"/>
    </location>
    <ligand>
        <name>Mg(2+)</name>
        <dbReference type="ChEBI" id="CHEBI:18420"/>
        <label>2</label>
    </ligand>
</feature>
<feature type="binding site" evidence="1">
    <location>
        <position position="51"/>
    </location>
    <ligand>
        <name>Mg(2+)</name>
        <dbReference type="ChEBI" id="CHEBI:18420"/>
        <label>1</label>
    </ligand>
</feature>
<feature type="binding site" evidence="1">
    <location>
        <position position="73"/>
    </location>
    <ligand>
        <name>Mg(2+)</name>
        <dbReference type="ChEBI" id="CHEBI:18420"/>
        <label>1</label>
    </ligand>
</feature>
<feature type="binding site" evidence="1">
    <location>
        <position position="138"/>
    </location>
    <ligand>
        <name>Mg(2+)</name>
        <dbReference type="ChEBI" id="CHEBI:18420"/>
        <label>2</label>
    </ligand>
</feature>
<accession>B7JVG1</accession>
<gene>
    <name evidence="1" type="primary">rnhA</name>
    <name type="ordered locus">PCC8801_4372</name>
</gene>
<sequence>MNDSPKKVLIYTDGACSGNPGSGGYGTVLIYNNHRKELSGGFRLTTNNRMEMMAAIVGLETLTIKCAVTLYTDSRYLVDAITKGWAKKWKANGWKRNAKENAKNPDLWEKLLDLCSQHEVDFVWVKGHAGHQENEYCDRLAVRASQQTNLPSDEVYENKGIET</sequence>
<dbReference type="EC" id="3.1.26.4" evidence="1"/>
<dbReference type="EMBL" id="CP001287">
    <property type="protein sequence ID" value="ACK68294.1"/>
    <property type="molecule type" value="Genomic_DNA"/>
</dbReference>
<dbReference type="RefSeq" id="WP_015785349.1">
    <property type="nucleotide sequence ID" value="NC_011726.1"/>
</dbReference>
<dbReference type="SMR" id="B7JVG1"/>
<dbReference type="STRING" id="41431.PCC8801_4372"/>
<dbReference type="KEGG" id="cyp:PCC8801_4372"/>
<dbReference type="eggNOG" id="COG0328">
    <property type="taxonomic scope" value="Bacteria"/>
</dbReference>
<dbReference type="HOGENOM" id="CLU_030894_6_2_3"/>
<dbReference type="OrthoDB" id="7845843at2"/>
<dbReference type="Proteomes" id="UP000008204">
    <property type="component" value="Chromosome"/>
</dbReference>
<dbReference type="GO" id="GO:0005737">
    <property type="term" value="C:cytoplasm"/>
    <property type="evidence" value="ECO:0007669"/>
    <property type="project" value="UniProtKB-SubCell"/>
</dbReference>
<dbReference type="GO" id="GO:0000287">
    <property type="term" value="F:magnesium ion binding"/>
    <property type="evidence" value="ECO:0007669"/>
    <property type="project" value="UniProtKB-UniRule"/>
</dbReference>
<dbReference type="GO" id="GO:0003676">
    <property type="term" value="F:nucleic acid binding"/>
    <property type="evidence" value="ECO:0007669"/>
    <property type="project" value="InterPro"/>
</dbReference>
<dbReference type="GO" id="GO:0004523">
    <property type="term" value="F:RNA-DNA hybrid ribonuclease activity"/>
    <property type="evidence" value="ECO:0007669"/>
    <property type="project" value="UniProtKB-UniRule"/>
</dbReference>
<dbReference type="GO" id="GO:0043137">
    <property type="term" value="P:DNA replication, removal of RNA primer"/>
    <property type="evidence" value="ECO:0007669"/>
    <property type="project" value="TreeGrafter"/>
</dbReference>
<dbReference type="CDD" id="cd09278">
    <property type="entry name" value="RNase_HI_prokaryote_like"/>
    <property type="match status" value="1"/>
</dbReference>
<dbReference type="FunFam" id="3.30.420.10:FF:000089">
    <property type="entry name" value="Ribonuclease H"/>
    <property type="match status" value="1"/>
</dbReference>
<dbReference type="Gene3D" id="3.30.420.10">
    <property type="entry name" value="Ribonuclease H-like superfamily/Ribonuclease H"/>
    <property type="match status" value="1"/>
</dbReference>
<dbReference type="HAMAP" id="MF_00042">
    <property type="entry name" value="RNase_H"/>
    <property type="match status" value="1"/>
</dbReference>
<dbReference type="InterPro" id="IPR050092">
    <property type="entry name" value="RNase_H"/>
</dbReference>
<dbReference type="InterPro" id="IPR012337">
    <property type="entry name" value="RNaseH-like_sf"/>
</dbReference>
<dbReference type="InterPro" id="IPR002156">
    <property type="entry name" value="RNaseH_domain"/>
</dbReference>
<dbReference type="InterPro" id="IPR036397">
    <property type="entry name" value="RNaseH_sf"/>
</dbReference>
<dbReference type="InterPro" id="IPR022892">
    <property type="entry name" value="RNaseHI"/>
</dbReference>
<dbReference type="NCBIfam" id="NF001236">
    <property type="entry name" value="PRK00203.1"/>
    <property type="match status" value="1"/>
</dbReference>
<dbReference type="PANTHER" id="PTHR10642">
    <property type="entry name" value="RIBONUCLEASE H1"/>
    <property type="match status" value="1"/>
</dbReference>
<dbReference type="PANTHER" id="PTHR10642:SF26">
    <property type="entry name" value="RIBONUCLEASE H1"/>
    <property type="match status" value="1"/>
</dbReference>
<dbReference type="Pfam" id="PF00075">
    <property type="entry name" value="RNase_H"/>
    <property type="match status" value="1"/>
</dbReference>
<dbReference type="SUPFAM" id="SSF53098">
    <property type="entry name" value="Ribonuclease H-like"/>
    <property type="match status" value="1"/>
</dbReference>
<dbReference type="PROSITE" id="PS50879">
    <property type="entry name" value="RNASE_H_1"/>
    <property type="match status" value="1"/>
</dbReference>
<proteinExistence type="inferred from homology"/>
<protein>
    <recommendedName>
        <fullName evidence="1">Ribonuclease H</fullName>
        <shortName evidence="1">RNase H</shortName>
        <ecNumber evidence="1">3.1.26.4</ecNumber>
    </recommendedName>
</protein>
<reference key="1">
    <citation type="journal article" date="2011" name="MBio">
        <title>Novel metabolic attributes of the genus Cyanothece, comprising a group of unicellular nitrogen-fixing Cyanobacteria.</title>
        <authorList>
            <person name="Bandyopadhyay A."/>
            <person name="Elvitigala T."/>
            <person name="Welsh E."/>
            <person name="Stockel J."/>
            <person name="Liberton M."/>
            <person name="Min H."/>
            <person name="Sherman L.A."/>
            <person name="Pakrasi H.B."/>
        </authorList>
    </citation>
    <scope>NUCLEOTIDE SEQUENCE [LARGE SCALE GENOMIC DNA]</scope>
    <source>
        <strain>PCC 8801 / RF-1</strain>
    </source>
</reference>
<organism>
    <name type="scientific">Rippkaea orientalis (strain PCC 8801 / RF-1)</name>
    <name type="common">Cyanothece sp. (strain PCC 8801)</name>
    <dbReference type="NCBI Taxonomy" id="41431"/>
    <lineage>
        <taxon>Bacteria</taxon>
        <taxon>Bacillati</taxon>
        <taxon>Cyanobacteriota</taxon>
        <taxon>Cyanophyceae</taxon>
        <taxon>Oscillatoriophycideae</taxon>
        <taxon>Chroococcales</taxon>
        <taxon>Aphanothecaceae</taxon>
        <taxon>Rippkaea</taxon>
        <taxon>Rippkaea orientalis</taxon>
    </lineage>
</organism>
<name>RNH_RIPO1</name>
<evidence type="ECO:0000255" key="1">
    <source>
        <dbReference type="HAMAP-Rule" id="MF_00042"/>
    </source>
</evidence>
<evidence type="ECO:0000255" key="2">
    <source>
        <dbReference type="PROSITE-ProRule" id="PRU00408"/>
    </source>
</evidence>